<accession>P08892</accession>
<feature type="chain" id="PRO_0000145863" description="Phosphoglycerate kinase A">
    <location>
        <begin position="1"/>
        <end position="508"/>
    </location>
</feature>
<feature type="binding site" evidence="1">
    <location>
        <position position="32"/>
    </location>
    <ligand>
        <name>(2R)-3-phosphoglycerate</name>
        <dbReference type="ChEBI" id="CHEBI:58272"/>
    </ligand>
</feature>
<feature type="binding site" evidence="3">
    <location>
        <position position="33"/>
    </location>
    <ligand>
        <name>(2R)-3-phosphoglycerate</name>
        <dbReference type="ChEBI" id="CHEBI:58272"/>
    </ligand>
</feature>
<feature type="binding site" evidence="1">
    <location>
        <position position="34"/>
    </location>
    <ligand>
        <name>(2R)-3-phosphoglycerate</name>
        <dbReference type="ChEBI" id="CHEBI:58272"/>
    </ligand>
</feature>
<feature type="binding site" evidence="3">
    <location>
        <position position="35"/>
    </location>
    <ligand>
        <name>(2R)-3-phosphoglycerate</name>
        <dbReference type="ChEBI" id="CHEBI:58272"/>
    </ligand>
</feature>
<feature type="binding site" evidence="3">
    <location>
        <position position="48"/>
    </location>
    <ligand>
        <name>(2R)-3-phosphoglycerate</name>
        <dbReference type="ChEBI" id="CHEBI:58272"/>
    </ligand>
</feature>
<feature type="binding site" evidence="1">
    <location>
        <position position="70"/>
    </location>
    <ligand>
        <name>(2R)-3-phosphoglycerate</name>
        <dbReference type="ChEBI" id="CHEBI:58272"/>
    </ligand>
</feature>
<feature type="binding site" evidence="3">
    <location>
        <position position="71"/>
    </location>
    <ligand>
        <name>(2R)-3-phosphoglycerate</name>
        <dbReference type="ChEBI" id="CHEBI:58272"/>
    </ligand>
</feature>
<feature type="binding site" evidence="1">
    <location>
        <position position="73"/>
    </location>
    <ligand>
        <name>(2R)-3-phosphoglycerate</name>
        <dbReference type="ChEBI" id="CHEBI:58272"/>
    </ligand>
</feature>
<feature type="binding site" evidence="3">
    <location>
        <position position="74"/>
    </location>
    <ligand>
        <name>(2R)-3-phosphoglycerate</name>
        <dbReference type="ChEBI" id="CHEBI:58272"/>
    </ligand>
</feature>
<feature type="binding site" evidence="3">
    <location>
        <position position="224"/>
    </location>
    <ligand>
        <name>(2R)-3-phosphoglycerate</name>
        <dbReference type="ChEBI" id="CHEBI:58272"/>
    </ligand>
</feature>
<feature type="binding site" evidence="1">
    <location>
        <position position="260"/>
    </location>
    <ligand>
        <name>(2R)-3-phosphoglycerate</name>
        <dbReference type="ChEBI" id="CHEBI:58272"/>
    </ligand>
</feature>
<feature type="binding site" evidence="3">
    <location>
        <position position="261"/>
    </location>
    <ligand>
        <name>(2R)-3-phosphoglycerate</name>
        <dbReference type="ChEBI" id="CHEBI:58272"/>
    </ligand>
</feature>
<feature type="binding site" evidence="1">
    <location>
        <position position="306"/>
    </location>
    <ligand>
        <name>ADP</name>
        <dbReference type="ChEBI" id="CHEBI:456216"/>
    </ligand>
</feature>
<feature type="binding site" evidence="1">
    <location>
        <position position="306"/>
    </location>
    <ligand>
        <name>CDP</name>
        <dbReference type="ChEBI" id="CHEBI:58069"/>
    </ligand>
</feature>
<feature type="binding site" evidence="2">
    <location>
        <position position="307"/>
    </location>
    <ligand>
        <name>ADP</name>
        <dbReference type="ChEBI" id="CHEBI:456216"/>
    </ligand>
</feature>
<feature type="binding site" evidence="3">
    <location>
        <position position="307"/>
    </location>
    <ligand>
        <name>AMP</name>
        <dbReference type="ChEBI" id="CHEBI:456215"/>
    </ligand>
</feature>
<feature type="binding site" evidence="3">
    <location>
        <position position="307"/>
    </location>
    <ligand>
        <name>ATP</name>
        <dbReference type="ChEBI" id="CHEBI:30616"/>
    </ligand>
</feature>
<feature type="binding site" evidence="1">
    <location>
        <position position="307"/>
    </location>
    <ligand>
        <name>Mg(2+)</name>
        <dbReference type="ChEBI" id="CHEBI:18420"/>
    </ligand>
</feature>
<feature type="binding site" evidence="2">
    <location>
        <position position="308"/>
    </location>
    <ligand>
        <name>(2R)-3-phosphoglycerate</name>
        <dbReference type="ChEBI" id="CHEBI:58272"/>
    </ligand>
</feature>
<feature type="binding site" evidence="3">
    <location>
        <position position="308"/>
    </location>
    <ligand>
        <name>AMP</name>
        <dbReference type="ChEBI" id="CHEBI:456215"/>
    </ligand>
</feature>
<feature type="binding site" evidence="1">
    <location>
        <position position="311"/>
    </location>
    <ligand>
        <name>CDP</name>
        <dbReference type="ChEBI" id="CHEBI:58069"/>
    </ligand>
</feature>
<feature type="binding site" evidence="1">
    <location>
        <position position="311"/>
    </location>
    <ligand>
        <name>Mg(2+)</name>
        <dbReference type="ChEBI" id="CHEBI:18420"/>
    </ligand>
</feature>
<feature type="binding site" evidence="2">
    <location>
        <position position="312"/>
    </location>
    <ligand>
        <name>ADP</name>
        <dbReference type="ChEBI" id="CHEBI:456216"/>
    </ligand>
</feature>
<feature type="binding site" evidence="3">
    <location>
        <position position="312"/>
    </location>
    <ligand>
        <name>AMP</name>
        <dbReference type="ChEBI" id="CHEBI:456215"/>
    </ligand>
</feature>
<feature type="binding site" evidence="3">
    <location>
        <position position="312"/>
    </location>
    <ligand>
        <name>ATP</name>
        <dbReference type="ChEBI" id="CHEBI:30616"/>
    </ligand>
</feature>
<feature type="binding site" evidence="1">
    <location>
        <position position="330"/>
    </location>
    <ligand>
        <name>ADP</name>
        <dbReference type="ChEBI" id="CHEBI:456216"/>
    </ligand>
</feature>
<feature type="binding site" evidence="1">
    <location>
        <position position="330"/>
    </location>
    <ligand>
        <name>CDP</name>
        <dbReference type="ChEBI" id="CHEBI:58069"/>
    </ligand>
</feature>
<feature type="binding site" evidence="3">
    <location>
        <position position="331"/>
    </location>
    <ligand>
        <name>AMP</name>
        <dbReference type="ChEBI" id="CHEBI:456215"/>
    </ligand>
</feature>
<feature type="binding site" evidence="3">
    <location>
        <position position="331"/>
    </location>
    <ligand>
        <name>ATP</name>
        <dbReference type="ChEBI" id="CHEBI:30616"/>
    </ligand>
</feature>
<feature type="binding site" evidence="2">
    <location>
        <position position="403"/>
    </location>
    <ligand>
        <name>ADP</name>
        <dbReference type="ChEBI" id="CHEBI:456216"/>
    </ligand>
</feature>
<feature type="binding site" evidence="3">
    <location>
        <position position="403"/>
    </location>
    <ligand>
        <name>AMP</name>
        <dbReference type="ChEBI" id="CHEBI:456215"/>
    </ligand>
</feature>
<feature type="binding site" evidence="3">
    <location>
        <position position="403"/>
    </location>
    <ligand>
        <name>ATP</name>
        <dbReference type="ChEBI" id="CHEBI:30616"/>
    </ligand>
</feature>
<feature type="binding site" evidence="2">
    <location>
        <position position="427"/>
    </location>
    <ligand>
        <name>ADP</name>
        <dbReference type="ChEBI" id="CHEBI:456216"/>
    </ligand>
</feature>
<feature type="binding site" evidence="1">
    <location>
        <position position="428"/>
    </location>
    <ligand>
        <name>CDP</name>
        <dbReference type="ChEBI" id="CHEBI:58069"/>
    </ligand>
</feature>
<feature type="binding site" evidence="1">
    <location>
        <position position="433"/>
    </location>
    <ligand>
        <name>ADP</name>
        <dbReference type="ChEBI" id="CHEBI:456216"/>
    </ligand>
</feature>
<feature type="binding site" evidence="1">
    <location>
        <position position="433"/>
    </location>
    <ligand>
        <name>CDP</name>
        <dbReference type="ChEBI" id="CHEBI:58069"/>
    </ligand>
</feature>
<feature type="binding site" evidence="2">
    <location>
        <position position="434"/>
    </location>
    <ligand>
        <name>ADP</name>
        <dbReference type="ChEBI" id="CHEBI:456216"/>
    </ligand>
</feature>
<feature type="binding site" evidence="3">
    <location>
        <position position="434"/>
    </location>
    <ligand>
        <name>AMP</name>
        <dbReference type="ChEBI" id="CHEBI:456215"/>
    </ligand>
</feature>
<feature type="binding site" evidence="3">
    <location>
        <position position="434"/>
    </location>
    <ligand>
        <name>ATP</name>
        <dbReference type="ChEBI" id="CHEBI:30616"/>
    </ligand>
</feature>
<feature type="binding site" evidence="2">
    <location>
        <position position="466"/>
    </location>
    <ligand>
        <name>ADP</name>
        <dbReference type="ChEBI" id="CHEBI:456216"/>
    </ligand>
</feature>
<feature type="binding site" evidence="3">
    <location>
        <position position="466"/>
    </location>
    <ligand>
        <name>ATP</name>
        <dbReference type="ChEBI" id="CHEBI:30616"/>
    </ligand>
</feature>
<feature type="binding site" evidence="3">
    <location>
        <position position="466"/>
    </location>
    <ligand>
        <name>Mg(2+)</name>
        <dbReference type="ChEBI" id="CHEBI:18420"/>
    </ligand>
</feature>
<feature type="binding site" evidence="2">
    <location>
        <position position="467"/>
    </location>
    <ligand>
        <name>ADP</name>
        <dbReference type="ChEBI" id="CHEBI:456216"/>
    </ligand>
</feature>
<feature type="binding site" evidence="3">
    <location>
        <position position="467"/>
    </location>
    <ligand>
        <name>ATP</name>
        <dbReference type="ChEBI" id="CHEBI:30616"/>
    </ligand>
</feature>
<protein>
    <recommendedName>
        <fullName>Phosphoglycerate kinase A</fullName>
        <ecNumber evidence="1">2.7.2.3</ecNumber>
    </recommendedName>
    <alternativeName>
        <fullName>PGK A allele 4</fullName>
    </alternativeName>
</protein>
<name>PGKD_TRYBB</name>
<comment type="catalytic activity">
    <reaction evidence="1">
        <text>(2R)-3-phosphoglycerate + ATP = (2R)-3-phospho-glyceroyl phosphate + ADP</text>
        <dbReference type="Rhea" id="RHEA:14801"/>
        <dbReference type="ChEBI" id="CHEBI:30616"/>
        <dbReference type="ChEBI" id="CHEBI:57604"/>
        <dbReference type="ChEBI" id="CHEBI:58272"/>
        <dbReference type="ChEBI" id="CHEBI:456216"/>
        <dbReference type="EC" id="2.7.2.3"/>
    </reaction>
</comment>
<comment type="cofactor">
    <cofactor evidence="2">
        <name>Mg(2+)</name>
        <dbReference type="ChEBI" id="CHEBI:18420"/>
    </cofactor>
</comment>
<comment type="pathway">
    <text>Carbohydrate degradation; glycolysis; pyruvate from D-glyceraldehyde 3-phosphate: step 2/5.</text>
</comment>
<comment type="subunit">
    <text>Monomer.</text>
</comment>
<comment type="miscellaneous">
    <text>In T.brucei, three genes code for phosphoglycerate kinase isozymes, which are transported to different cell compartments.</text>
</comment>
<comment type="similarity">
    <text evidence="4">Belongs to the phosphoglycerate kinase family.</text>
</comment>
<keyword id="KW-0067">ATP-binding</keyword>
<keyword id="KW-0324">Glycolysis</keyword>
<keyword id="KW-0418">Kinase</keyword>
<keyword id="KW-0460">Magnesium</keyword>
<keyword id="KW-0479">Metal-binding</keyword>
<keyword id="KW-0547">Nucleotide-binding</keyword>
<keyword id="KW-0808">Transferase</keyword>
<evidence type="ECO:0000250" key="1">
    <source>
        <dbReference type="UniProtKB" id="P00558"/>
    </source>
</evidence>
<evidence type="ECO:0000250" key="2">
    <source>
        <dbReference type="UniProtKB" id="P07378"/>
    </source>
</evidence>
<evidence type="ECO:0000250" key="3">
    <source>
        <dbReference type="UniProtKB" id="Q7SIB7"/>
    </source>
</evidence>
<evidence type="ECO:0000305" key="4"/>
<proteinExistence type="inferred from homology"/>
<organism>
    <name type="scientific">Trypanosoma brucei brucei</name>
    <dbReference type="NCBI Taxonomy" id="5702"/>
    <lineage>
        <taxon>Eukaryota</taxon>
        <taxon>Discoba</taxon>
        <taxon>Euglenozoa</taxon>
        <taxon>Kinetoplastea</taxon>
        <taxon>Metakinetoplastina</taxon>
        <taxon>Trypanosomatida</taxon>
        <taxon>Trypanosomatidae</taxon>
        <taxon>Trypanosoma</taxon>
    </lineage>
</organism>
<dbReference type="EC" id="2.7.2.3" evidence="1"/>
<dbReference type="EMBL" id="X05890">
    <property type="protein sequence ID" value="CAA29319.1"/>
    <property type="molecule type" value="Genomic_DNA"/>
</dbReference>
<dbReference type="PIR" id="S02233">
    <property type="entry name" value="TVUT4B"/>
</dbReference>
<dbReference type="SMR" id="P08892"/>
<dbReference type="UniPathway" id="UPA00109">
    <property type="reaction ID" value="UER00185"/>
</dbReference>
<dbReference type="GO" id="GO:0005829">
    <property type="term" value="C:cytosol"/>
    <property type="evidence" value="ECO:0007669"/>
    <property type="project" value="TreeGrafter"/>
</dbReference>
<dbReference type="GO" id="GO:0043531">
    <property type="term" value="F:ADP binding"/>
    <property type="evidence" value="ECO:0007669"/>
    <property type="project" value="TreeGrafter"/>
</dbReference>
<dbReference type="GO" id="GO:0005524">
    <property type="term" value="F:ATP binding"/>
    <property type="evidence" value="ECO:0007669"/>
    <property type="project" value="UniProtKB-KW"/>
</dbReference>
<dbReference type="GO" id="GO:0046872">
    <property type="term" value="F:metal ion binding"/>
    <property type="evidence" value="ECO:0007669"/>
    <property type="project" value="UniProtKB-KW"/>
</dbReference>
<dbReference type="GO" id="GO:0004618">
    <property type="term" value="F:phosphoglycerate kinase activity"/>
    <property type="evidence" value="ECO:0007669"/>
    <property type="project" value="UniProtKB-EC"/>
</dbReference>
<dbReference type="GO" id="GO:0006094">
    <property type="term" value="P:gluconeogenesis"/>
    <property type="evidence" value="ECO:0007669"/>
    <property type="project" value="TreeGrafter"/>
</dbReference>
<dbReference type="GO" id="GO:0006096">
    <property type="term" value="P:glycolytic process"/>
    <property type="evidence" value="ECO:0007669"/>
    <property type="project" value="UniProtKB-UniPathway"/>
</dbReference>
<dbReference type="CDD" id="cd00318">
    <property type="entry name" value="Phosphoglycerate_kinase"/>
    <property type="match status" value="1"/>
</dbReference>
<dbReference type="FunFam" id="3.40.50.1260:FF:000007">
    <property type="entry name" value="Phosphoglycerate kinase"/>
    <property type="match status" value="1"/>
</dbReference>
<dbReference type="FunFam" id="3.40.50.1260:FF:000026">
    <property type="entry name" value="Phosphoglycerate kinase A"/>
    <property type="match status" value="1"/>
</dbReference>
<dbReference type="FunFam" id="3.40.50.1260:FF:000027">
    <property type="entry name" value="Phosphoglycerate kinase A"/>
    <property type="match status" value="1"/>
</dbReference>
<dbReference type="Gene3D" id="3.40.50.1260">
    <property type="entry name" value="Phosphoglycerate kinase, N-terminal domain"/>
    <property type="match status" value="3"/>
</dbReference>
<dbReference type="HAMAP" id="MF_00145">
    <property type="entry name" value="Phosphoglyc_kinase"/>
    <property type="match status" value="1"/>
</dbReference>
<dbReference type="InterPro" id="IPR027250">
    <property type="entry name" value="Pgk_euglenozoa"/>
</dbReference>
<dbReference type="InterPro" id="IPR001576">
    <property type="entry name" value="Phosphoglycerate_kinase"/>
</dbReference>
<dbReference type="InterPro" id="IPR015911">
    <property type="entry name" value="Phosphoglycerate_kinase_CS"/>
</dbReference>
<dbReference type="InterPro" id="IPR015824">
    <property type="entry name" value="Phosphoglycerate_kinase_N"/>
</dbReference>
<dbReference type="InterPro" id="IPR036043">
    <property type="entry name" value="Phosphoglycerate_kinase_sf"/>
</dbReference>
<dbReference type="PANTHER" id="PTHR11406">
    <property type="entry name" value="PHOSPHOGLYCERATE KINASE"/>
    <property type="match status" value="1"/>
</dbReference>
<dbReference type="PANTHER" id="PTHR11406:SF23">
    <property type="entry name" value="PHOSPHOGLYCERATE KINASE 1, CHLOROPLASTIC-RELATED"/>
    <property type="match status" value="1"/>
</dbReference>
<dbReference type="Pfam" id="PF00162">
    <property type="entry name" value="PGK"/>
    <property type="match status" value="1"/>
</dbReference>
<dbReference type="PIRSF" id="PIRSF000724">
    <property type="entry name" value="Pgk"/>
    <property type="match status" value="1"/>
</dbReference>
<dbReference type="PIRSF" id="PIRSF500126">
    <property type="entry name" value="Pgk_euglenozoa"/>
    <property type="match status" value="1"/>
</dbReference>
<dbReference type="PRINTS" id="PR00477">
    <property type="entry name" value="PHGLYCKINASE"/>
</dbReference>
<dbReference type="SUPFAM" id="SSF53748">
    <property type="entry name" value="Phosphoglycerate kinase"/>
    <property type="match status" value="1"/>
</dbReference>
<dbReference type="PROSITE" id="PS00111">
    <property type="entry name" value="PGLYCERATE_KINASE"/>
    <property type="match status" value="1"/>
</dbReference>
<reference key="1">
    <citation type="journal article" date="1988" name="J. Mol. Biol.">
        <title>Evidence for gene conversion between the phosphoglycerate kinase genes of Trypanosoma brucei.</title>
        <authorList>
            <person name="le Blancq S.M."/>
            <person name="Swinkels B.W."/>
            <person name="Gibson W.C."/>
            <person name="Borst P."/>
        </authorList>
    </citation>
    <scope>NUCLEOTIDE SEQUENCE [GENOMIC DNA]</scope>
</reference>
<sequence length="508" mass="55668">MSTAPNAKNNISLKKSVGDVFRLTAKRVLMRVDFNVPMQNGHITNDYRIRAAIPTIRRVIDQGGICILLSHLGRPRGVSMVAGVRDIRRRYHEAQFHDNKGKTAFFSVLPGEEKVKILAKSSAREEATHISPEVKSGKTMLFARLPEDEKKSLLMQYLNENKDSALPQMSVSAGYEEQYSLRPVAVRLAELLGQHVYFAHDCLDARVEVSRLKRGNVMLLENVRFYSEENGENAEEREAMAKILASYGDVYISDAFGAAHRDSATMTGIPKILGHGAAGYLMEKEISYFAKVLGNPPRPLVAIVGGAKVSEKIQLLDNMLQRIDYLLIGGAMAYTFLKAQGYSIGKSKCEESKLEFARSLLKKAEDRKVQIILPIDHVCHTEFKAVDSPLITEDQNIPEGHMALDIGPKTIEKYVQTIGKCKSAIWNGPMGVFEMVPYSKGTFAIAKAMGRGTQKRGLMSIIGGGESAGAAELCGKLSISHVSTGGGASLELLEGKTLPGVAVLDDKE</sequence>